<evidence type="ECO:0000255" key="1">
    <source>
        <dbReference type="HAMAP-Rule" id="MF_01844"/>
    </source>
</evidence>
<feature type="chain" id="PRO_0000334408" description="Na(+)/H(+) antiporter NhaA 2">
    <location>
        <begin position="1"/>
        <end position="436"/>
    </location>
</feature>
<feature type="transmembrane region" description="Helical" evidence="1">
    <location>
        <begin position="35"/>
        <end position="55"/>
    </location>
</feature>
<feature type="transmembrane region" description="Helical" evidence="1">
    <location>
        <begin position="80"/>
        <end position="100"/>
    </location>
</feature>
<feature type="transmembrane region" description="Helical" evidence="1">
    <location>
        <begin position="116"/>
        <end position="136"/>
    </location>
</feature>
<feature type="transmembrane region" description="Helical" evidence="1">
    <location>
        <begin position="147"/>
        <end position="167"/>
    </location>
</feature>
<feature type="transmembrane region" description="Helical" evidence="1">
    <location>
        <begin position="176"/>
        <end position="196"/>
    </location>
</feature>
<feature type="transmembrane region" description="Helical" evidence="1">
    <location>
        <begin position="201"/>
        <end position="221"/>
    </location>
</feature>
<feature type="transmembrane region" description="Helical" evidence="1">
    <location>
        <begin position="226"/>
        <end position="246"/>
    </location>
</feature>
<feature type="transmembrane region" description="Helical" evidence="1">
    <location>
        <begin position="283"/>
        <end position="303"/>
    </location>
</feature>
<feature type="transmembrane region" description="Helical" evidence="1">
    <location>
        <begin position="313"/>
        <end position="333"/>
    </location>
</feature>
<feature type="transmembrane region" description="Helical" evidence="1">
    <location>
        <begin position="354"/>
        <end position="374"/>
    </location>
</feature>
<feature type="transmembrane region" description="Helical" evidence="1">
    <location>
        <begin position="385"/>
        <end position="405"/>
    </location>
</feature>
<proteinExistence type="inferred from homology"/>
<gene>
    <name evidence="1" type="primary">nhaA2</name>
    <name type="ordered locus">Sare_2262</name>
</gene>
<comment type="function">
    <text evidence="1">Na(+)/H(+) antiporter that extrudes sodium in exchange for external protons.</text>
</comment>
<comment type="catalytic activity">
    <reaction evidence="1">
        <text>Na(+)(in) + 2 H(+)(out) = Na(+)(out) + 2 H(+)(in)</text>
        <dbReference type="Rhea" id="RHEA:29251"/>
        <dbReference type="ChEBI" id="CHEBI:15378"/>
        <dbReference type="ChEBI" id="CHEBI:29101"/>
    </reaction>
    <physiologicalReaction direction="left-to-right" evidence="1">
        <dbReference type="Rhea" id="RHEA:29252"/>
    </physiologicalReaction>
</comment>
<comment type="subcellular location">
    <subcellularLocation>
        <location evidence="1">Cell membrane</location>
        <topology evidence="1">Multi-pass membrane protein</topology>
    </subcellularLocation>
</comment>
<comment type="similarity">
    <text evidence="1">Belongs to the NhaA Na(+)/H(+) (TC 2.A.33) antiporter family.</text>
</comment>
<sequence length="436" mass="46503">MTDRTPPQGRARRLFSRTSWPEARFLADVLRTETFGGGLLLLGAVLALLWANSPWADSYAALASWVPWPGGSDLHLDLDLATWAADGLLAIFFFVVGLELKREFVAGDLRDPRRAALPVVAAIGGMIVPALIYVGINLAAGGENLRGWAIPTATDIAFALAVLAVIGSHLPQGLRAFLLTLAVVDDLLAITVIAIFYTGDFKLTPLLVALLPIALFGLLVQRRKTWWWALIPLAVVAWTLVHESGVHATVAGVLLGFTVPVLRGREGDRHGLAEHLEHRWRPVSAGFAVPVFAFFAAGVSLRGADLGGIVTDPIVVGIVAGLVLGKVLGIFGSTFMLARFTRAELDRDITWTDLLGVSLLAGIGFTVSLLIGELAFEGGTAGDNVKAAVLTGSVIAALLASAVLSRRNKAYRRIAAKERLDSNRDGVPDVFQHRDG</sequence>
<name>NHAA2_SALAI</name>
<accession>A8M1G0</accession>
<dbReference type="EMBL" id="CP000850">
    <property type="protein sequence ID" value="ABV98121.1"/>
    <property type="molecule type" value="Genomic_DNA"/>
</dbReference>
<dbReference type="SMR" id="A8M1G0"/>
<dbReference type="STRING" id="391037.Sare_2262"/>
<dbReference type="KEGG" id="saq:Sare_2262"/>
<dbReference type="PATRIC" id="fig|391037.6.peg.2291"/>
<dbReference type="eggNOG" id="COG3004">
    <property type="taxonomic scope" value="Bacteria"/>
</dbReference>
<dbReference type="HOGENOM" id="CLU_015803_0_0_11"/>
<dbReference type="OrthoDB" id="117402at2"/>
<dbReference type="GO" id="GO:0005886">
    <property type="term" value="C:plasma membrane"/>
    <property type="evidence" value="ECO:0007669"/>
    <property type="project" value="UniProtKB-SubCell"/>
</dbReference>
<dbReference type="GO" id="GO:0015385">
    <property type="term" value="F:sodium:proton antiporter activity"/>
    <property type="evidence" value="ECO:0007669"/>
    <property type="project" value="TreeGrafter"/>
</dbReference>
<dbReference type="GO" id="GO:0006885">
    <property type="term" value="P:regulation of pH"/>
    <property type="evidence" value="ECO:0007669"/>
    <property type="project" value="InterPro"/>
</dbReference>
<dbReference type="Gene3D" id="1.20.1530.10">
    <property type="entry name" value="Na+/H+ antiporter like domain"/>
    <property type="match status" value="1"/>
</dbReference>
<dbReference type="HAMAP" id="MF_01844">
    <property type="entry name" value="NhaA"/>
    <property type="match status" value="1"/>
</dbReference>
<dbReference type="InterPro" id="IPR023171">
    <property type="entry name" value="Na/H_antiporter_dom_sf"/>
</dbReference>
<dbReference type="InterPro" id="IPR004670">
    <property type="entry name" value="NhaA"/>
</dbReference>
<dbReference type="NCBIfam" id="TIGR00773">
    <property type="entry name" value="NhaA"/>
    <property type="match status" value="1"/>
</dbReference>
<dbReference type="PANTHER" id="PTHR30341:SF0">
    <property type="entry name" value="NA(+)_H(+) ANTIPORTER NHAA"/>
    <property type="match status" value="1"/>
</dbReference>
<dbReference type="PANTHER" id="PTHR30341">
    <property type="entry name" value="SODIUM ION/PROTON ANTIPORTER NHAA-RELATED"/>
    <property type="match status" value="1"/>
</dbReference>
<dbReference type="Pfam" id="PF06965">
    <property type="entry name" value="Na_H_antiport_1"/>
    <property type="match status" value="1"/>
</dbReference>
<keyword id="KW-0050">Antiport</keyword>
<keyword id="KW-1003">Cell membrane</keyword>
<keyword id="KW-0406">Ion transport</keyword>
<keyword id="KW-0472">Membrane</keyword>
<keyword id="KW-0915">Sodium</keyword>
<keyword id="KW-0739">Sodium transport</keyword>
<keyword id="KW-0812">Transmembrane</keyword>
<keyword id="KW-1133">Transmembrane helix</keyword>
<keyword id="KW-0813">Transport</keyword>
<protein>
    <recommendedName>
        <fullName evidence="1">Na(+)/H(+) antiporter NhaA 2</fullName>
    </recommendedName>
    <alternativeName>
        <fullName evidence="1">Sodium/proton antiporter NhaA 2</fullName>
    </alternativeName>
</protein>
<organism>
    <name type="scientific">Salinispora arenicola (strain CNS-205)</name>
    <dbReference type="NCBI Taxonomy" id="391037"/>
    <lineage>
        <taxon>Bacteria</taxon>
        <taxon>Bacillati</taxon>
        <taxon>Actinomycetota</taxon>
        <taxon>Actinomycetes</taxon>
        <taxon>Micromonosporales</taxon>
        <taxon>Micromonosporaceae</taxon>
        <taxon>Salinispora</taxon>
    </lineage>
</organism>
<reference key="1">
    <citation type="submission" date="2007-10" db="EMBL/GenBank/DDBJ databases">
        <title>Complete sequence of Salinispora arenicola CNS-205.</title>
        <authorList>
            <consortium name="US DOE Joint Genome Institute"/>
            <person name="Copeland A."/>
            <person name="Lucas S."/>
            <person name="Lapidus A."/>
            <person name="Barry K."/>
            <person name="Glavina del Rio T."/>
            <person name="Dalin E."/>
            <person name="Tice H."/>
            <person name="Pitluck S."/>
            <person name="Foster B."/>
            <person name="Schmutz J."/>
            <person name="Larimer F."/>
            <person name="Land M."/>
            <person name="Hauser L."/>
            <person name="Kyrpides N."/>
            <person name="Ivanova N."/>
            <person name="Jensen P.R."/>
            <person name="Moore B.S."/>
            <person name="Penn K."/>
            <person name="Jenkins C."/>
            <person name="Udwary D."/>
            <person name="Xiang L."/>
            <person name="Gontang E."/>
            <person name="Richardson P."/>
        </authorList>
    </citation>
    <scope>NUCLEOTIDE SEQUENCE [LARGE SCALE GENOMIC DNA]</scope>
    <source>
        <strain>CNS-205</strain>
    </source>
</reference>